<keyword id="KW-1185">Reference proteome</keyword>
<feature type="chain" id="PRO_0000282641" description="BSD domain-containing protein 1">
    <location>
        <begin position="1"/>
        <end position="451"/>
    </location>
</feature>
<feature type="domain" description="BSD" evidence="1">
    <location>
        <begin position="146"/>
        <end position="198"/>
    </location>
</feature>
<feature type="region of interest" description="Disordered" evidence="2">
    <location>
        <begin position="252"/>
        <end position="296"/>
    </location>
</feature>
<feature type="region of interest" description="Disordered" evidence="2">
    <location>
        <begin position="309"/>
        <end position="424"/>
    </location>
</feature>
<feature type="compositionally biased region" description="Low complexity" evidence="2">
    <location>
        <begin position="275"/>
        <end position="295"/>
    </location>
</feature>
<feature type="compositionally biased region" description="Polar residues" evidence="2">
    <location>
        <begin position="309"/>
        <end position="320"/>
    </location>
</feature>
<feature type="compositionally biased region" description="Basic and acidic residues" evidence="2">
    <location>
        <begin position="365"/>
        <end position="388"/>
    </location>
</feature>
<feature type="compositionally biased region" description="Polar residues" evidence="2">
    <location>
        <begin position="392"/>
        <end position="411"/>
    </location>
</feature>
<feature type="compositionally biased region" description="Acidic residues" evidence="2">
    <location>
        <begin position="412"/>
        <end position="424"/>
    </location>
</feature>
<sequence>MAEGEDAGWWRSWLQQSYQAVKEKSTEALEFMKRDLAEFTQVVQHDTACTIAATASVVKDRLARTEASGATEKVRKGISDFLGVISDTFAPSPDKTIDCDVITLMATPTGTTEPYDSAKARLYSLQSDPATYCNEPDGPAELLEAWLSRFSLEEKKGEIAELLATSPSIRALYTKMVPAAVSHSEFWQRYFYKVHRLEQDEVRREALKQRAEQSIHQEEPGWEEDEEEFLGMSPLPCANVKFPQAAEKASVSAALEGSQPSVHKGPSGESWAILPPELAPAEGSPSESSESVSLVTQIANPASVPVVQLQTGVQPSGNRDLSQRLLEATSEEQSPLPKPPEPGHPSAAAQEPAVCSEQTAVTGPKEVESKAQGRTETLKEEGPTDLRVFELNSDSGKSTPSNNGKKGSSTDISEDWEKDFDLDMTEEEVQLALSKVEVSGELEDEEWEDWE</sequence>
<reference key="1">
    <citation type="journal article" date="2005" name="Genome Biol.">
        <title>Full-length cDNAs from chicken bursal lymphocytes to facilitate gene function analysis.</title>
        <authorList>
            <person name="Caldwell R.B."/>
            <person name="Kierzek A.M."/>
            <person name="Arakawa H."/>
            <person name="Bezzubov Y."/>
            <person name="Zaim J."/>
            <person name="Fiedler P."/>
            <person name="Kutter S."/>
            <person name="Blagodatski A."/>
            <person name="Kostovska D."/>
            <person name="Koter M."/>
            <person name="Plachy J."/>
            <person name="Carninci P."/>
            <person name="Hayashizaki Y."/>
            <person name="Buerstedde J.-M."/>
        </authorList>
    </citation>
    <scope>NUCLEOTIDE SEQUENCE [LARGE SCALE MRNA]</scope>
    <source>
        <strain>CB</strain>
        <tissue>Bursa of Fabricius</tissue>
    </source>
</reference>
<dbReference type="EMBL" id="AJ720778">
    <property type="protein sequence ID" value="CAG32437.1"/>
    <property type="molecule type" value="mRNA"/>
</dbReference>
<dbReference type="RefSeq" id="NP_001012860.1">
    <property type="nucleotide sequence ID" value="NM_001012842.1"/>
</dbReference>
<dbReference type="FunCoup" id="Q5ZIK6">
    <property type="interactions" value="558"/>
</dbReference>
<dbReference type="STRING" id="9031.ENSGALP00000058657"/>
<dbReference type="PaxDb" id="9031-ENSGALP00000005376"/>
<dbReference type="GeneID" id="419658"/>
<dbReference type="KEGG" id="gga:419658"/>
<dbReference type="CTD" id="55108"/>
<dbReference type="VEuPathDB" id="HostDB:geneid_419658"/>
<dbReference type="eggNOG" id="KOG2690">
    <property type="taxonomic scope" value="Eukaryota"/>
</dbReference>
<dbReference type="InParanoid" id="Q5ZIK6"/>
<dbReference type="OrthoDB" id="73788at2759"/>
<dbReference type="PhylomeDB" id="Q5ZIK6"/>
<dbReference type="PRO" id="PR:Q5ZIK6"/>
<dbReference type="Proteomes" id="UP000000539">
    <property type="component" value="Unassembled WGS sequence"/>
</dbReference>
<dbReference type="GO" id="GO:0005737">
    <property type="term" value="C:cytoplasm"/>
    <property type="evidence" value="ECO:0000318"/>
    <property type="project" value="GO_Central"/>
</dbReference>
<dbReference type="Gene3D" id="1.10.3970.10">
    <property type="entry name" value="BSD domain"/>
    <property type="match status" value="1"/>
</dbReference>
<dbReference type="InterPro" id="IPR005607">
    <property type="entry name" value="BSD_dom"/>
</dbReference>
<dbReference type="InterPro" id="IPR035925">
    <property type="entry name" value="BSD_dom_sf"/>
</dbReference>
<dbReference type="InterPro" id="IPR051494">
    <property type="entry name" value="BSD_domain-containing"/>
</dbReference>
<dbReference type="PANTHER" id="PTHR16019:SF5">
    <property type="entry name" value="BSD DOMAIN-CONTAINING PROTEIN 1"/>
    <property type="match status" value="1"/>
</dbReference>
<dbReference type="PANTHER" id="PTHR16019">
    <property type="entry name" value="SYNAPSE-ASSOCIATED PROTEIN"/>
    <property type="match status" value="1"/>
</dbReference>
<dbReference type="Pfam" id="PF03909">
    <property type="entry name" value="BSD"/>
    <property type="match status" value="1"/>
</dbReference>
<dbReference type="SMART" id="SM00751">
    <property type="entry name" value="BSD"/>
    <property type="match status" value="1"/>
</dbReference>
<dbReference type="SUPFAM" id="SSF140383">
    <property type="entry name" value="BSD domain-like"/>
    <property type="match status" value="1"/>
</dbReference>
<dbReference type="PROSITE" id="PS50858">
    <property type="entry name" value="BSD"/>
    <property type="match status" value="1"/>
</dbReference>
<accession>Q5ZIK6</accession>
<gene>
    <name type="primary">BSDC1</name>
    <name type="ORF">RCJMB04_25f24</name>
</gene>
<protein>
    <recommendedName>
        <fullName>BSD domain-containing protein 1</fullName>
    </recommendedName>
</protein>
<organism>
    <name type="scientific">Gallus gallus</name>
    <name type="common">Chicken</name>
    <dbReference type="NCBI Taxonomy" id="9031"/>
    <lineage>
        <taxon>Eukaryota</taxon>
        <taxon>Metazoa</taxon>
        <taxon>Chordata</taxon>
        <taxon>Craniata</taxon>
        <taxon>Vertebrata</taxon>
        <taxon>Euteleostomi</taxon>
        <taxon>Archelosauria</taxon>
        <taxon>Archosauria</taxon>
        <taxon>Dinosauria</taxon>
        <taxon>Saurischia</taxon>
        <taxon>Theropoda</taxon>
        <taxon>Coelurosauria</taxon>
        <taxon>Aves</taxon>
        <taxon>Neognathae</taxon>
        <taxon>Galloanserae</taxon>
        <taxon>Galliformes</taxon>
        <taxon>Phasianidae</taxon>
        <taxon>Phasianinae</taxon>
        <taxon>Gallus</taxon>
    </lineage>
</organism>
<name>BSDC1_CHICK</name>
<proteinExistence type="evidence at transcript level"/>
<evidence type="ECO:0000255" key="1">
    <source>
        <dbReference type="PROSITE-ProRule" id="PRU00036"/>
    </source>
</evidence>
<evidence type="ECO:0000256" key="2">
    <source>
        <dbReference type="SAM" id="MobiDB-lite"/>
    </source>
</evidence>